<gene>
    <name type="primary">OPG116</name>
    <name type="synonym">UNG</name>
    <name type="ordered locus">MVA101R</name>
    <name type="ordered locus">ACAM3000_MVA_101</name>
</gene>
<feature type="chain" id="PRO_0000176179" description="Uracil-DNA glycosylase">
    <location>
        <begin position="1"/>
        <end position="218"/>
    </location>
</feature>
<feature type="active site" description="Proton acceptor" evidence="2">
    <location>
        <position position="68"/>
    </location>
</feature>
<feature type="mutagenesis site" description="Defective DNA replication, reduced ability to interact with A20." evidence="3">
    <original>G</original>
    <variation>R</variation>
    <location>
        <position position="179"/>
    </location>
</feature>
<feature type="strand" evidence="5">
    <location>
        <begin position="3"/>
        <end position="5"/>
    </location>
</feature>
<feature type="strand" evidence="5">
    <location>
        <begin position="12"/>
        <end position="14"/>
    </location>
</feature>
<feature type="helix" evidence="5">
    <location>
        <begin position="17"/>
        <end position="22"/>
    </location>
</feature>
<feature type="helix" evidence="5">
    <location>
        <begin position="23"/>
        <end position="37"/>
    </location>
</feature>
<feature type="strand" evidence="5">
    <location>
        <begin position="42"/>
        <end position="44"/>
    </location>
</feature>
<feature type="helix" evidence="5">
    <location>
        <begin position="46"/>
        <end position="48"/>
    </location>
</feature>
<feature type="helix" evidence="5">
    <location>
        <begin position="51"/>
        <end position="54"/>
    </location>
</feature>
<feature type="strand" evidence="5">
    <location>
        <begin position="62"/>
        <end position="68"/>
    </location>
</feature>
<feature type="turn" evidence="5">
    <location>
        <begin position="71"/>
        <end position="73"/>
    </location>
</feature>
<feature type="helix" evidence="5">
    <location>
        <begin position="87"/>
        <end position="100"/>
    </location>
</feature>
<feature type="strand" evidence="5">
    <location>
        <begin position="106"/>
        <end position="108"/>
    </location>
</feature>
<feature type="helix" evidence="5">
    <location>
        <begin position="110"/>
        <end position="112"/>
    </location>
</feature>
<feature type="strand" evidence="5">
    <location>
        <begin position="116"/>
        <end position="123"/>
    </location>
</feature>
<feature type="turn" evidence="5">
    <location>
        <begin position="130"/>
        <end position="133"/>
    </location>
</feature>
<feature type="helix" evidence="5">
    <location>
        <begin position="134"/>
        <end position="149"/>
    </location>
</feature>
<feature type="strand" evidence="5">
    <location>
        <begin position="153"/>
        <end position="158"/>
    </location>
</feature>
<feature type="turn" evidence="5">
    <location>
        <begin position="160"/>
        <end position="165"/>
    </location>
</feature>
<feature type="helix" evidence="5">
    <location>
        <begin position="166"/>
        <end position="170"/>
    </location>
</feature>
<feature type="strand" evidence="5">
    <location>
        <begin position="173"/>
        <end position="179"/>
    </location>
</feature>
<feature type="helix" evidence="5">
    <location>
        <begin position="185"/>
        <end position="187"/>
    </location>
</feature>
<feature type="helix" evidence="5">
    <location>
        <begin position="188"/>
        <end position="191"/>
    </location>
</feature>
<feature type="helix" evidence="5">
    <location>
        <begin position="194"/>
        <end position="204"/>
    </location>
</feature>
<feature type="helix" evidence="5">
    <location>
        <begin position="212"/>
        <end position="215"/>
    </location>
</feature>
<organism>
    <name type="scientific">Vaccinia virus (strain Ankara)</name>
    <name type="common">VACV</name>
    <dbReference type="NCBI Taxonomy" id="126794"/>
    <lineage>
        <taxon>Viruses</taxon>
        <taxon>Varidnaviria</taxon>
        <taxon>Bamfordvirae</taxon>
        <taxon>Nucleocytoviricota</taxon>
        <taxon>Pokkesviricetes</taxon>
        <taxon>Chitovirales</taxon>
        <taxon>Poxviridae</taxon>
        <taxon>Chordopoxvirinae</taxon>
        <taxon>Orthopoxvirus</taxon>
        <taxon>Vaccinia virus</taxon>
    </lineage>
</organism>
<keyword id="KW-0002">3D-structure</keyword>
<keyword id="KW-0227">DNA damage</keyword>
<keyword id="KW-0234">DNA repair</keyword>
<keyword id="KW-0238">DNA-binding</keyword>
<keyword id="KW-0378">Hydrolase</keyword>
<reference key="1">
    <citation type="journal article" date="1998" name="Virology">
        <title>The complete genomic sequence of the modified vaccinia Ankara strain: comparison with other orthopoxviruses.</title>
        <authorList>
            <person name="Antoine G."/>
            <person name="Scheiflinger F."/>
            <person name="Dorner F."/>
            <person name="Falkner F.G."/>
        </authorList>
    </citation>
    <scope>NUCLEOTIDE SEQUENCE [LARGE SCALE GENOMIC DNA]</scope>
</reference>
<reference key="2">
    <citation type="submission" date="2004-04" db="EMBL/GenBank/DDBJ databases">
        <authorList>
            <person name="Esposito J.J."/>
            <person name="Frace M."/>
            <person name="Sammons S.A."/>
            <person name="Olsen-Rasmussen M.S."/>
            <person name="Osborne J."/>
            <person name="Khristova M."/>
            <person name="Wohlhueter R.M."/>
        </authorList>
    </citation>
    <scope>NUCLEOTIDE SEQUENCE [LARGE SCALE GENOMIC DNA]</scope>
    <source>
        <strain>Isolate Acambis 3000</strain>
    </source>
</reference>
<reference key="3">
    <citation type="journal article" date="2007" name="BMC Struct. Biol.">
        <title>Crystal structure of vaccinia virus uracil-DNA glycosylase reveals dimeric assembly.</title>
        <authorList>
            <person name="Schormann N."/>
            <person name="Grigorian A."/>
            <person name="Samal A."/>
            <person name="Krishnan R."/>
            <person name="DeLucas L."/>
            <person name="Chattopadhyay D."/>
        </authorList>
    </citation>
    <scope>X-RAY CRYSTALLOGRAPHY (2.4 ANGSTROMS)</scope>
    <scope>SUBUNIT</scope>
    <scope>MUTAGENESIS OF GLY-179</scope>
</reference>
<reference key="4">
    <citation type="journal article" date="2010" name="J. Virol.">
        <title>Vaccinia virus D4 mutants defective in processive DNA synthesis retain binding to A20 and DNA.</title>
        <authorList>
            <person name="Druck Shudofsky A.M."/>
            <person name="Silverman J.E."/>
            <person name="Chattopadhyay D."/>
            <person name="Ricciardi R.P."/>
        </authorList>
    </citation>
    <scope>X-RAY CRYSTALLOGRAPHY (2.4 ANGSTROMS)</scope>
    <scope>DNA-BINDING</scope>
</reference>
<comment type="function">
    <text evidence="1">Plays an essential role in viral replication as a component of the DNA polymerase processivity factor. Excises uracil residues from the DNA which can arise as a result of misincorporation of dUMP residues by DNA polymerase or due to deamination of cytosine.</text>
</comment>
<comment type="catalytic activity">
    <reaction evidence="1">
        <text>Hydrolyzes single-stranded DNA or mismatched double-stranded DNA and polynucleotides, releasing free uracil.</text>
        <dbReference type="EC" id="3.2.2.27"/>
    </reaction>
</comment>
<comment type="subunit">
    <text evidence="1">Homodimer. Interacts with protein OPG148. Component of the Uracil-DNA glycosylase(UDG)-OPG148-polymerase complex; OPG148 and UDG form a heterodimeric processivity factor that associates with OPG71 to form the processive polymerase holoenzyme.</text>
</comment>
<comment type="similarity">
    <text evidence="4">Belongs to the uracil-DNA glycosylase (UDG) superfamily. UNG family.</text>
</comment>
<dbReference type="EC" id="3.2.2.27" evidence="1"/>
<dbReference type="EMBL" id="U94848">
    <property type="protein sequence ID" value="AAB96513.1"/>
    <property type="molecule type" value="Genomic_DNA"/>
</dbReference>
<dbReference type="EMBL" id="AY603355">
    <property type="protein sequence ID" value="AAT10499.1"/>
    <property type="molecule type" value="Genomic_DNA"/>
</dbReference>
<dbReference type="PIR" id="T37377">
    <property type="entry name" value="T37377"/>
</dbReference>
<dbReference type="PDB" id="2OWQ">
    <property type="method" value="X-ray"/>
    <property type="resolution" value="2.40 A"/>
    <property type="chains" value="A/B=1-218"/>
</dbReference>
<dbReference type="PDB" id="3NT7">
    <property type="method" value="X-ray"/>
    <property type="resolution" value="2.40 A"/>
    <property type="chains" value="A/C=1-218"/>
</dbReference>
<dbReference type="PDB" id="4DOF">
    <property type="method" value="X-ray"/>
    <property type="resolution" value="2.80 A"/>
    <property type="chains" value="A/B/C/D=1-218"/>
</dbReference>
<dbReference type="PDB" id="4DOG">
    <property type="method" value="X-ray"/>
    <property type="resolution" value="2.30 A"/>
    <property type="chains" value="A=1-218"/>
</dbReference>
<dbReference type="PDB" id="4IRB">
    <property type="method" value="X-ray"/>
    <property type="resolution" value="2.30 A"/>
    <property type="chains" value="A/B/C/D=1-218"/>
</dbReference>
<dbReference type="PDB" id="4LZB">
    <property type="method" value="X-ray"/>
    <property type="resolution" value="2.03 A"/>
    <property type="chains" value="A/B/C/D/E/F/G/H/I/J/K/L=1-218"/>
</dbReference>
<dbReference type="PDB" id="4QC9">
    <property type="method" value="X-ray"/>
    <property type="resolution" value="2.26 A"/>
    <property type="chains" value="A/B/C/D=1-218"/>
</dbReference>
<dbReference type="PDB" id="4QCA">
    <property type="method" value="X-ray"/>
    <property type="resolution" value="1.90 A"/>
    <property type="chains" value="A/B/C/D=1-218"/>
</dbReference>
<dbReference type="PDB" id="5JX3">
    <property type="method" value="X-ray"/>
    <property type="resolution" value="2.30 A"/>
    <property type="chains" value="A/B/C/D/E/F/G/H=1-218"/>
</dbReference>
<dbReference type="PDBsum" id="2OWQ"/>
<dbReference type="PDBsum" id="3NT7"/>
<dbReference type="PDBsum" id="4DOF"/>
<dbReference type="PDBsum" id="4DOG"/>
<dbReference type="PDBsum" id="4IRB"/>
<dbReference type="PDBsum" id="4LZB"/>
<dbReference type="PDBsum" id="4QC9"/>
<dbReference type="PDBsum" id="4QCA"/>
<dbReference type="PDBsum" id="5JX3"/>
<dbReference type="SMR" id="Q91UM2"/>
<dbReference type="DNASU" id="3707565"/>
<dbReference type="KEGG" id="vg:3707565"/>
<dbReference type="BRENDA" id="3.2.2.27">
    <property type="organism ID" value="6591"/>
</dbReference>
<dbReference type="Proteomes" id="UP000159908">
    <property type="component" value="Segment"/>
</dbReference>
<dbReference type="Proteomes" id="UP000172909">
    <property type="component" value="Segment"/>
</dbReference>
<dbReference type="GO" id="GO:0003677">
    <property type="term" value="F:DNA binding"/>
    <property type="evidence" value="ECO:0007669"/>
    <property type="project" value="UniProtKB-KW"/>
</dbReference>
<dbReference type="GO" id="GO:0004844">
    <property type="term" value="F:uracil DNA N-glycosylase activity"/>
    <property type="evidence" value="ECO:0007669"/>
    <property type="project" value="UniProtKB-EC"/>
</dbReference>
<dbReference type="GO" id="GO:0006281">
    <property type="term" value="P:DNA repair"/>
    <property type="evidence" value="ECO:0007669"/>
    <property type="project" value="UniProtKB-KW"/>
</dbReference>
<dbReference type="CDD" id="cd19372">
    <property type="entry name" value="UDG_F1_VAVC_D4-like"/>
    <property type="match status" value="1"/>
</dbReference>
<dbReference type="FunFam" id="3.40.470.10:FF:000011">
    <property type="entry name" value="Uracil-DNA glycosylase"/>
    <property type="match status" value="1"/>
</dbReference>
<dbReference type="Gene3D" id="3.40.470.10">
    <property type="entry name" value="Uracil-DNA glycosylase-like domain"/>
    <property type="match status" value="1"/>
</dbReference>
<dbReference type="InterPro" id="IPR018085">
    <property type="entry name" value="Ura-DNA_Glyclase_AS"/>
</dbReference>
<dbReference type="InterPro" id="IPR036895">
    <property type="entry name" value="Uracil-DNA_glycosylase-like_sf"/>
</dbReference>
<dbReference type="SUPFAM" id="SSF52141">
    <property type="entry name" value="Uracil-DNA glycosylase-like"/>
    <property type="match status" value="1"/>
</dbReference>
<dbReference type="PROSITE" id="PS00130">
    <property type="entry name" value="U_DNA_GLYCOSYLASE"/>
    <property type="match status" value="1"/>
</dbReference>
<protein>
    <recommendedName>
        <fullName>Uracil-DNA glycosylase</fullName>
        <shortName>UDG</shortName>
        <ecNumber evidence="1">3.2.2.27</ecNumber>
    </recommendedName>
</protein>
<evidence type="ECO:0000250" key="1">
    <source>
        <dbReference type="UniProtKB" id="P04303"/>
    </source>
</evidence>
<evidence type="ECO:0000255" key="2">
    <source>
        <dbReference type="PROSITE-ProRule" id="PRU10072"/>
    </source>
</evidence>
<evidence type="ECO:0000269" key="3">
    <source>
    </source>
</evidence>
<evidence type="ECO:0000305" key="4"/>
<evidence type="ECO:0007829" key="5">
    <source>
        <dbReference type="PDB" id="4LZB"/>
    </source>
</evidence>
<organismHost>
    <name type="scientific">Homo sapiens</name>
    <name type="common">Human</name>
    <dbReference type="NCBI Taxonomy" id="9606"/>
</organismHost>
<name>UNG_VACCA</name>
<accession>Q91UM2</accession>
<sequence length="218" mass="25052">MNSVTVSHAPYTITYHDDWEPVMSQLVEFYNEVASWLLRDETSPIPDKFFIQLKQPLRNKRVCVCGIDPYPKDGTGVPFESPNFTKKSIKEIASSISRLTGVIDYKGYNLNIIDGVIPWNYYLSCKLGETKSHAIYWDKISKLLLQHITKHVSVLYCLGKTDFSNIRAKLESPVTTIVGYHPAARDRQFEKDRSFEIINVLLELDNKAPINWAQGFIY</sequence>
<proteinExistence type="evidence at protein level"/>